<comment type="function">
    <text evidence="1">Catalyzes the cleavage of L-kynurenine (L-Kyn) and L-3-hydroxykynurenine (L-3OHKyn) into anthranilic acid (AA) and 3-hydroxyanthranilic acid (3-OHAA), respectively.</text>
</comment>
<comment type="catalytic activity">
    <reaction evidence="1">
        <text>L-kynurenine + H2O = anthranilate + L-alanine + H(+)</text>
        <dbReference type="Rhea" id="RHEA:16813"/>
        <dbReference type="ChEBI" id="CHEBI:15377"/>
        <dbReference type="ChEBI" id="CHEBI:15378"/>
        <dbReference type="ChEBI" id="CHEBI:16567"/>
        <dbReference type="ChEBI" id="CHEBI:57959"/>
        <dbReference type="ChEBI" id="CHEBI:57972"/>
        <dbReference type="EC" id="3.7.1.3"/>
    </reaction>
</comment>
<comment type="catalytic activity">
    <reaction evidence="1">
        <text>3-hydroxy-L-kynurenine + H2O = 3-hydroxyanthranilate + L-alanine + H(+)</text>
        <dbReference type="Rhea" id="RHEA:25143"/>
        <dbReference type="ChEBI" id="CHEBI:15377"/>
        <dbReference type="ChEBI" id="CHEBI:15378"/>
        <dbReference type="ChEBI" id="CHEBI:36559"/>
        <dbReference type="ChEBI" id="CHEBI:57972"/>
        <dbReference type="ChEBI" id="CHEBI:58125"/>
        <dbReference type="EC" id="3.7.1.3"/>
    </reaction>
</comment>
<comment type="cofactor">
    <cofactor evidence="1">
        <name>pyridoxal 5'-phosphate</name>
        <dbReference type="ChEBI" id="CHEBI:597326"/>
    </cofactor>
</comment>
<comment type="pathway">
    <text evidence="1">Amino-acid degradation; L-kynurenine degradation; L-alanine and anthranilate from L-kynurenine: step 1/1.</text>
</comment>
<comment type="pathway">
    <text evidence="1">Cofactor biosynthesis; NAD(+) biosynthesis; quinolinate from L-kynurenine: step 2/3.</text>
</comment>
<comment type="subunit">
    <text evidence="1">Homodimer.</text>
</comment>
<comment type="similarity">
    <text evidence="1">Belongs to the kynureninase family.</text>
</comment>
<keyword id="KW-0378">Hydrolase</keyword>
<keyword id="KW-0662">Pyridine nucleotide biosynthesis</keyword>
<keyword id="KW-0663">Pyridoxal phosphate</keyword>
<keyword id="KW-1185">Reference proteome</keyword>
<reference key="1">
    <citation type="journal article" date="2004" name="Proc. Natl. Acad. Sci. U.S.A.">
        <title>Genomic plasticity of the causative agent of melioidosis, Burkholderia pseudomallei.</title>
        <authorList>
            <person name="Holden M.T.G."/>
            <person name="Titball R.W."/>
            <person name="Peacock S.J."/>
            <person name="Cerdeno-Tarraga A.-M."/>
            <person name="Atkins T."/>
            <person name="Crossman L.C."/>
            <person name="Pitt T."/>
            <person name="Churcher C."/>
            <person name="Mungall K.L."/>
            <person name="Bentley S.D."/>
            <person name="Sebaihia M."/>
            <person name="Thomson N.R."/>
            <person name="Bason N."/>
            <person name="Beacham I.R."/>
            <person name="Brooks K."/>
            <person name="Brown K.A."/>
            <person name="Brown N.F."/>
            <person name="Challis G.L."/>
            <person name="Cherevach I."/>
            <person name="Chillingworth T."/>
            <person name="Cronin A."/>
            <person name="Crossett B."/>
            <person name="Davis P."/>
            <person name="DeShazer D."/>
            <person name="Feltwell T."/>
            <person name="Fraser A."/>
            <person name="Hance Z."/>
            <person name="Hauser H."/>
            <person name="Holroyd S."/>
            <person name="Jagels K."/>
            <person name="Keith K.E."/>
            <person name="Maddison M."/>
            <person name="Moule S."/>
            <person name="Price C."/>
            <person name="Quail M.A."/>
            <person name="Rabbinowitsch E."/>
            <person name="Rutherford K."/>
            <person name="Sanders M."/>
            <person name="Simmonds M."/>
            <person name="Songsivilai S."/>
            <person name="Stevens K."/>
            <person name="Tumapa S."/>
            <person name="Vesaratchavest M."/>
            <person name="Whitehead S."/>
            <person name="Yeats C."/>
            <person name="Barrell B.G."/>
            <person name="Oyston P.C.F."/>
            <person name="Parkhill J."/>
        </authorList>
    </citation>
    <scope>NUCLEOTIDE SEQUENCE [LARGE SCALE GENOMIC DNA]</scope>
    <source>
        <strain>K96243</strain>
    </source>
</reference>
<protein>
    <recommendedName>
        <fullName evidence="1">Kynureninase</fullName>
        <ecNumber evidence="1">3.7.1.3</ecNumber>
    </recommendedName>
    <alternativeName>
        <fullName evidence="1">L-kynurenine hydrolase</fullName>
    </alternativeName>
</protein>
<proteinExistence type="inferred from homology"/>
<evidence type="ECO:0000255" key="1">
    <source>
        <dbReference type="HAMAP-Rule" id="MF_01970"/>
    </source>
</evidence>
<accession>Q63WP4</accession>
<name>KYNU_BURPS</name>
<dbReference type="EC" id="3.7.1.3" evidence="1"/>
<dbReference type="EMBL" id="BX571965">
    <property type="protein sequence ID" value="CAH34839.1"/>
    <property type="molecule type" value="Genomic_DNA"/>
</dbReference>
<dbReference type="RefSeq" id="WP_004550795.1">
    <property type="nucleotide sequence ID" value="NZ_CP009538.1"/>
</dbReference>
<dbReference type="RefSeq" id="YP_107472.1">
    <property type="nucleotide sequence ID" value="NC_006350.1"/>
</dbReference>
<dbReference type="SMR" id="Q63WP4"/>
<dbReference type="STRING" id="272560.BPSL0847"/>
<dbReference type="KEGG" id="bps:BPSL0847"/>
<dbReference type="PATRIC" id="fig|272560.51.peg.752"/>
<dbReference type="eggNOG" id="COG3844">
    <property type="taxonomic scope" value="Bacteria"/>
</dbReference>
<dbReference type="UniPathway" id="UPA00253">
    <property type="reaction ID" value="UER00329"/>
</dbReference>
<dbReference type="UniPathway" id="UPA00334">
    <property type="reaction ID" value="UER00455"/>
</dbReference>
<dbReference type="Proteomes" id="UP000000605">
    <property type="component" value="Chromosome 1"/>
</dbReference>
<dbReference type="GO" id="GO:0005737">
    <property type="term" value="C:cytoplasm"/>
    <property type="evidence" value="ECO:0007669"/>
    <property type="project" value="InterPro"/>
</dbReference>
<dbReference type="GO" id="GO:0030429">
    <property type="term" value="F:kynureninase activity"/>
    <property type="evidence" value="ECO:0007669"/>
    <property type="project" value="UniProtKB-UniRule"/>
</dbReference>
<dbReference type="GO" id="GO:0030170">
    <property type="term" value="F:pyridoxal phosphate binding"/>
    <property type="evidence" value="ECO:0007669"/>
    <property type="project" value="UniProtKB-UniRule"/>
</dbReference>
<dbReference type="GO" id="GO:0043420">
    <property type="term" value="P:anthranilate metabolic process"/>
    <property type="evidence" value="ECO:0007669"/>
    <property type="project" value="TreeGrafter"/>
</dbReference>
<dbReference type="GO" id="GO:0097053">
    <property type="term" value="P:L-kynurenine catabolic process"/>
    <property type="evidence" value="ECO:0007669"/>
    <property type="project" value="UniProtKB-UniRule"/>
</dbReference>
<dbReference type="GO" id="GO:0019441">
    <property type="term" value="P:L-tryptophan catabolic process to kynurenine"/>
    <property type="evidence" value="ECO:0007669"/>
    <property type="project" value="TreeGrafter"/>
</dbReference>
<dbReference type="GO" id="GO:0009435">
    <property type="term" value="P:NAD biosynthetic process"/>
    <property type="evidence" value="ECO:0007669"/>
    <property type="project" value="UniProtKB-UniPathway"/>
</dbReference>
<dbReference type="GO" id="GO:0019805">
    <property type="term" value="P:quinolinate biosynthetic process"/>
    <property type="evidence" value="ECO:0007669"/>
    <property type="project" value="UniProtKB-UniRule"/>
</dbReference>
<dbReference type="FunFam" id="3.40.640.10:FF:000107">
    <property type="entry name" value="Kynureninase"/>
    <property type="match status" value="1"/>
</dbReference>
<dbReference type="Gene3D" id="3.90.1150.10">
    <property type="entry name" value="Aspartate Aminotransferase, domain 1"/>
    <property type="match status" value="1"/>
</dbReference>
<dbReference type="Gene3D" id="3.40.640.10">
    <property type="entry name" value="Type I PLP-dependent aspartate aminotransferase-like (Major domain)"/>
    <property type="match status" value="1"/>
</dbReference>
<dbReference type="HAMAP" id="MF_01970">
    <property type="entry name" value="Kynureninase"/>
    <property type="match status" value="1"/>
</dbReference>
<dbReference type="InterPro" id="IPR010111">
    <property type="entry name" value="Kynureninase"/>
</dbReference>
<dbReference type="InterPro" id="IPR015424">
    <property type="entry name" value="PyrdxlP-dep_Trfase"/>
</dbReference>
<dbReference type="InterPro" id="IPR015421">
    <property type="entry name" value="PyrdxlP-dep_Trfase_major"/>
</dbReference>
<dbReference type="InterPro" id="IPR015422">
    <property type="entry name" value="PyrdxlP-dep_Trfase_small"/>
</dbReference>
<dbReference type="NCBIfam" id="TIGR01814">
    <property type="entry name" value="kynureninase"/>
    <property type="match status" value="1"/>
</dbReference>
<dbReference type="PANTHER" id="PTHR14084">
    <property type="entry name" value="KYNURENINASE"/>
    <property type="match status" value="1"/>
</dbReference>
<dbReference type="PANTHER" id="PTHR14084:SF0">
    <property type="entry name" value="KYNURENINASE"/>
    <property type="match status" value="1"/>
</dbReference>
<dbReference type="Pfam" id="PF22580">
    <property type="entry name" value="KYNU_C"/>
    <property type="match status" value="1"/>
</dbReference>
<dbReference type="PIRSF" id="PIRSF038800">
    <property type="entry name" value="KYNU"/>
    <property type="match status" value="1"/>
</dbReference>
<dbReference type="SUPFAM" id="SSF53383">
    <property type="entry name" value="PLP-dependent transferases"/>
    <property type="match status" value="1"/>
</dbReference>
<sequence length="416" mass="45898">MKTREEALALDRDDPLAPLREQFALPAGVIYLDGNSLGAQPRAAAARAQQVIGAEWGEGLIRSWNTAGWFALPRRLGDRLAPLIGAADGEVAITDTISINLFKLLAAMLRHQARHAPKRRVIVSERSNFPTDLYIAQGLIAQFDRDYELRLIDDPADLPDALDDETAVAMITHVNYRTGYMHDMPSVTQTVRQAGALMLWDLAHSAGAVPVDLNGALADGAVGCTYKYLNGGPGSPAFVWVPKRHQRAFEQPLSGWWGHRAPFAMQPAFEPDPGIARFLCGTQPIVSMSMVECGLDVFAQTDMHAIRRKSLALTDAFVALVESRCAGQPLKLVTPRAHHQRGSQASFEHPHGYEVMQALIARGVIGDYREPRILRFGFTPLYTRFVDVWDAVETLRDILDTEAWRAPEFATRAAVT</sequence>
<organism>
    <name type="scientific">Burkholderia pseudomallei (strain K96243)</name>
    <dbReference type="NCBI Taxonomy" id="272560"/>
    <lineage>
        <taxon>Bacteria</taxon>
        <taxon>Pseudomonadati</taxon>
        <taxon>Pseudomonadota</taxon>
        <taxon>Betaproteobacteria</taxon>
        <taxon>Burkholderiales</taxon>
        <taxon>Burkholderiaceae</taxon>
        <taxon>Burkholderia</taxon>
        <taxon>pseudomallei group</taxon>
    </lineage>
</organism>
<feature type="chain" id="PRO_0000357002" description="Kynureninase">
    <location>
        <begin position="1"/>
        <end position="416"/>
    </location>
</feature>
<feature type="binding site" evidence="1">
    <location>
        <position position="97"/>
    </location>
    <ligand>
        <name>pyridoxal 5'-phosphate</name>
        <dbReference type="ChEBI" id="CHEBI:597326"/>
    </ligand>
</feature>
<feature type="binding site" evidence="1">
    <location>
        <position position="98"/>
    </location>
    <ligand>
        <name>pyridoxal 5'-phosphate</name>
        <dbReference type="ChEBI" id="CHEBI:597326"/>
    </ligand>
</feature>
<feature type="binding site" evidence="1">
    <location>
        <begin position="129"/>
        <end position="132"/>
    </location>
    <ligand>
        <name>pyridoxal 5'-phosphate</name>
        <dbReference type="ChEBI" id="CHEBI:597326"/>
    </ligand>
</feature>
<feature type="binding site" evidence="1">
    <location>
        <position position="172"/>
    </location>
    <ligand>
        <name>pyridoxal 5'-phosphate</name>
        <dbReference type="ChEBI" id="CHEBI:597326"/>
    </ligand>
</feature>
<feature type="binding site" evidence="1">
    <location>
        <position position="201"/>
    </location>
    <ligand>
        <name>pyridoxal 5'-phosphate</name>
        <dbReference type="ChEBI" id="CHEBI:597326"/>
    </ligand>
</feature>
<feature type="binding site" evidence="1">
    <location>
        <position position="204"/>
    </location>
    <ligand>
        <name>pyridoxal 5'-phosphate</name>
        <dbReference type="ChEBI" id="CHEBI:597326"/>
    </ligand>
</feature>
<feature type="binding site" evidence="1">
    <location>
        <position position="226"/>
    </location>
    <ligand>
        <name>pyridoxal 5'-phosphate</name>
        <dbReference type="ChEBI" id="CHEBI:597326"/>
    </ligand>
</feature>
<feature type="binding site" evidence="1">
    <location>
        <position position="256"/>
    </location>
    <ligand>
        <name>pyridoxal 5'-phosphate</name>
        <dbReference type="ChEBI" id="CHEBI:597326"/>
    </ligand>
</feature>
<feature type="binding site" evidence="1">
    <location>
        <position position="282"/>
    </location>
    <ligand>
        <name>pyridoxal 5'-phosphate</name>
        <dbReference type="ChEBI" id="CHEBI:597326"/>
    </ligand>
</feature>
<feature type="modified residue" description="N6-(pyridoxal phosphate)lysine" evidence="1">
    <location>
        <position position="227"/>
    </location>
</feature>
<gene>
    <name evidence="1" type="primary">kynU</name>
    <name type="ordered locus">BPSL0847</name>
</gene>